<accession>A0A193H2X2</accession>
<feature type="peptide" id="PRO_0000439465" description="Cruzioseptin-3" evidence="1">
    <location>
        <begin position="3"/>
        <end position="25"/>
    </location>
</feature>
<feature type="propeptide" id="PRO_0000439466" evidence="4">
    <location>
        <begin position="27"/>
        <end position="28"/>
    </location>
</feature>
<feature type="modified residue" description="Glutamine amide" evidence="4">
    <location>
        <position position="25"/>
    </location>
</feature>
<feature type="non-terminal residue" evidence="5">
    <location>
        <position position="1"/>
    </location>
</feature>
<protein>
    <recommendedName>
        <fullName evidence="2">Cruzioseptin-3</fullName>
        <shortName evidence="2">CZS-3</shortName>
    </recommendedName>
</protein>
<dbReference type="EMBL" id="KX065080">
    <property type="protein sequence ID" value="ANN87760.1"/>
    <property type="molecule type" value="mRNA"/>
</dbReference>
<dbReference type="GO" id="GO:0005576">
    <property type="term" value="C:extracellular region"/>
    <property type="evidence" value="ECO:0007669"/>
    <property type="project" value="UniProtKB-SubCell"/>
</dbReference>
<dbReference type="GO" id="GO:0042742">
    <property type="term" value="P:defense response to bacterium"/>
    <property type="evidence" value="ECO:0007669"/>
    <property type="project" value="UniProtKB-KW"/>
</dbReference>
<dbReference type="GO" id="GO:0050832">
    <property type="term" value="P:defense response to fungus"/>
    <property type="evidence" value="ECO:0007669"/>
    <property type="project" value="UniProtKB-KW"/>
</dbReference>
<dbReference type="GO" id="GO:0031640">
    <property type="term" value="P:killing of cells of another organism"/>
    <property type="evidence" value="ECO:0007669"/>
    <property type="project" value="UniProtKB-KW"/>
</dbReference>
<keyword id="KW-0027">Amidation</keyword>
<keyword id="KW-0878">Amphibian defense peptide</keyword>
<keyword id="KW-0044">Antibiotic</keyword>
<keyword id="KW-0929">Antimicrobial</keyword>
<keyword id="KW-0165">Cleavage on pair of basic residues</keyword>
<keyword id="KW-0295">Fungicide</keyword>
<keyword id="KW-0348">Hemagglutinin</keyword>
<keyword id="KW-0964">Secreted</keyword>
<organism evidence="5">
    <name type="scientific">Cruziohyla calcarifer</name>
    <name type="common">Splendid leaf frog</name>
    <name type="synonym">Agalychnis calcarifer</name>
    <dbReference type="NCBI Taxonomy" id="318249"/>
    <lineage>
        <taxon>Eukaryota</taxon>
        <taxon>Metazoa</taxon>
        <taxon>Chordata</taxon>
        <taxon>Craniata</taxon>
        <taxon>Vertebrata</taxon>
        <taxon>Euteleostomi</taxon>
        <taxon>Amphibia</taxon>
        <taxon>Batrachia</taxon>
        <taxon>Anura</taxon>
        <taxon>Neobatrachia</taxon>
        <taxon>Hyloidea</taxon>
        <taxon>Hylidae</taxon>
        <taxon>Phyllomedusinae</taxon>
        <taxon>Cruziohyla</taxon>
    </lineage>
</organism>
<sequence>KRGFLDVVKHIGKAALGAVTHLINQGEQ</sequence>
<name>CZS3_CRUCA</name>
<proteinExistence type="evidence at protein level"/>
<comment type="function">
    <text evidence="1">Has antimicrobial activity against Gram-negative bacterium E.coli (MIC=13.32 uM), against Gram-positive bacterium S.aureus (MIC=13.32 uM) and against fungus C.albicans (MIC=13.32 uM). At higher concentrations also has a bactericidal and fungicidal effect. Has hemagglutinating activity against horse erythrocytes.</text>
</comment>
<comment type="subcellular location">
    <subcellularLocation>
        <location evidence="1">Secreted</location>
    </subcellularLocation>
</comment>
<comment type="tissue specificity">
    <text evidence="4">Expressed by the skin glands.</text>
</comment>
<comment type="mass spectrometry"/>
<comment type="similarity">
    <text evidence="3">Belongs to the frog skin active peptide (FSAP) family. Cruzioseptin subfamily.</text>
</comment>
<comment type="online information" name="The antimicrobial peptide database">
    <link uri="https://wangapd3.com/database/query_output.php?ID=02715"/>
</comment>
<reference evidence="5" key="1">
    <citation type="journal article" date="2016" name="J. Proteomics">
        <title>Peptidomic approach identifies cruzioseptins, a new family of potent antimicrobial peptides in the splendid leaf frog, Cruziohyla calcarifer.</title>
        <authorList>
            <person name="Proano-Bolanos C."/>
            <person name="Zhou M."/>
            <person name="Wang L."/>
            <person name="Coloma L.A."/>
            <person name="Chen T."/>
            <person name="Shaw C."/>
        </authorList>
    </citation>
    <scope>NUCLEOTIDE SEQUENCE [MRNA]</scope>
    <scope>FUNCTION</scope>
    <scope>SYNTHESIS</scope>
    <scope>SUBCELLULAR LOCATION</scope>
    <scope>AMIDATION AT GLN-25</scope>
    <scope>MASS SPECTROMETRY</scope>
    <scope>IDENTIFICATION BY MASS SPECTROMETRY</scope>
    <source>
        <tissue evidence="5">Skin secretion</tissue>
    </source>
</reference>
<evidence type="ECO:0000269" key="1">
    <source>
    </source>
</evidence>
<evidence type="ECO:0000303" key="2">
    <source>
    </source>
</evidence>
<evidence type="ECO:0000305" key="3"/>
<evidence type="ECO:0000305" key="4">
    <source>
    </source>
</evidence>
<evidence type="ECO:0000312" key="5">
    <source>
        <dbReference type="EMBL" id="ANN87760.1"/>
    </source>
</evidence>